<evidence type="ECO:0000255" key="1">
    <source>
        <dbReference type="HAMAP-Rule" id="MF_00316"/>
    </source>
</evidence>
<feature type="chain" id="PRO_1000205076" description="Molybdenum cofactor guanylyltransferase">
    <location>
        <begin position="1"/>
        <end position="201"/>
    </location>
</feature>
<feature type="binding site" evidence="1">
    <location>
        <begin position="14"/>
        <end position="16"/>
    </location>
    <ligand>
        <name>GTP</name>
        <dbReference type="ChEBI" id="CHEBI:37565"/>
    </ligand>
</feature>
<feature type="binding site" evidence="1">
    <location>
        <position position="31"/>
    </location>
    <ligand>
        <name>GTP</name>
        <dbReference type="ChEBI" id="CHEBI:37565"/>
    </ligand>
</feature>
<feature type="binding site" evidence="1">
    <location>
        <position position="104"/>
    </location>
    <ligand>
        <name>GTP</name>
        <dbReference type="ChEBI" id="CHEBI:37565"/>
    </ligand>
</feature>
<feature type="binding site" evidence="1">
    <location>
        <position position="104"/>
    </location>
    <ligand>
        <name>Mg(2+)</name>
        <dbReference type="ChEBI" id="CHEBI:18420"/>
    </ligand>
</feature>
<gene>
    <name evidence="1" type="primary">mobA</name>
    <name type="ordered locus">HPG27_726</name>
</gene>
<dbReference type="EC" id="2.7.7.77" evidence="1"/>
<dbReference type="EMBL" id="CP001173">
    <property type="protein sequence ID" value="ACI27481.1"/>
    <property type="molecule type" value="Genomic_DNA"/>
</dbReference>
<dbReference type="RefSeq" id="WP_000795289.1">
    <property type="nucleotide sequence ID" value="NC_011333.1"/>
</dbReference>
<dbReference type="SMR" id="B5Z7D2"/>
<dbReference type="KEGG" id="hpg:HPG27_726"/>
<dbReference type="HOGENOM" id="CLU_055597_2_2_7"/>
<dbReference type="Proteomes" id="UP000001735">
    <property type="component" value="Chromosome"/>
</dbReference>
<dbReference type="GO" id="GO:0005737">
    <property type="term" value="C:cytoplasm"/>
    <property type="evidence" value="ECO:0007669"/>
    <property type="project" value="UniProtKB-SubCell"/>
</dbReference>
<dbReference type="GO" id="GO:0005525">
    <property type="term" value="F:GTP binding"/>
    <property type="evidence" value="ECO:0007669"/>
    <property type="project" value="UniProtKB-UniRule"/>
</dbReference>
<dbReference type="GO" id="GO:0046872">
    <property type="term" value="F:metal ion binding"/>
    <property type="evidence" value="ECO:0007669"/>
    <property type="project" value="UniProtKB-KW"/>
</dbReference>
<dbReference type="GO" id="GO:0061603">
    <property type="term" value="F:molybdenum cofactor guanylyltransferase activity"/>
    <property type="evidence" value="ECO:0007669"/>
    <property type="project" value="UniProtKB-EC"/>
</dbReference>
<dbReference type="GO" id="GO:1902758">
    <property type="term" value="P:bis(molybdopterin guanine dinucleotide)molybdenum biosynthetic process"/>
    <property type="evidence" value="ECO:0007669"/>
    <property type="project" value="TreeGrafter"/>
</dbReference>
<dbReference type="CDD" id="cd02503">
    <property type="entry name" value="MobA"/>
    <property type="match status" value="1"/>
</dbReference>
<dbReference type="Gene3D" id="3.90.550.10">
    <property type="entry name" value="Spore Coat Polysaccharide Biosynthesis Protein SpsA, Chain A"/>
    <property type="match status" value="1"/>
</dbReference>
<dbReference type="HAMAP" id="MF_00316">
    <property type="entry name" value="MobA"/>
    <property type="match status" value="1"/>
</dbReference>
<dbReference type="InterPro" id="IPR025877">
    <property type="entry name" value="MobA-like_NTP_Trfase"/>
</dbReference>
<dbReference type="InterPro" id="IPR013482">
    <property type="entry name" value="Molybde_CF_guanTrfase"/>
</dbReference>
<dbReference type="InterPro" id="IPR029044">
    <property type="entry name" value="Nucleotide-diphossugar_trans"/>
</dbReference>
<dbReference type="NCBIfam" id="NF001837">
    <property type="entry name" value="PRK00560.1"/>
    <property type="match status" value="1"/>
</dbReference>
<dbReference type="PANTHER" id="PTHR19136">
    <property type="entry name" value="MOLYBDENUM COFACTOR GUANYLYLTRANSFERASE"/>
    <property type="match status" value="1"/>
</dbReference>
<dbReference type="PANTHER" id="PTHR19136:SF81">
    <property type="entry name" value="MOLYBDENUM COFACTOR GUANYLYLTRANSFERASE"/>
    <property type="match status" value="1"/>
</dbReference>
<dbReference type="Pfam" id="PF12804">
    <property type="entry name" value="NTP_transf_3"/>
    <property type="match status" value="1"/>
</dbReference>
<dbReference type="SUPFAM" id="SSF53448">
    <property type="entry name" value="Nucleotide-diphospho-sugar transferases"/>
    <property type="match status" value="1"/>
</dbReference>
<sequence length="201" mass="22910">MKNPIIDNIPCVLLAGGKSSRFITNNIQTNKALMPLKSYSSLLEYQYTRLLKLFKKVIISTKKSYELNAPYLLEKESDLFSPLFGIHNAFLTLQTPYIFFIPIDTPLVSFESIKALCGIKNFSVVYAKSPTKEHYLISLWHQSTLNALNYALKTQNYRLSDLIKNASSTAIHFDKEEEFLNLNTLKDYELAVQILKEGSNG</sequence>
<comment type="function">
    <text evidence="1">Transfers a GMP moiety from GTP to Mo-molybdopterin (Mo-MPT) cofactor (Moco or molybdenum cofactor) to form Mo-molybdopterin guanine dinucleotide (Mo-MGD) cofactor.</text>
</comment>
<comment type="catalytic activity">
    <reaction evidence="1">
        <text>Mo-molybdopterin + GTP + H(+) = Mo-molybdopterin guanine dinucleotide + diphosphate</text>
        <dbReference type="Rhea" id="RHEA:34243"/>
        <dbReference type="ChEBI" id="CHEBI:15378"/>
        <dbReference type="ChEBI" id="CHEBI:33019"/>
        <dbReference type="ChEBI" id="CHEBI:37565"/>
        <dbReference type="ChEBI" id="CHEBI:71302"/>
        <dbReference type="ChEBI" id="CHEBI:71310"/>
        <dbReference type="EC" id="2.7.7.77"/>
    </reaction>
</comment>
<comment type="cofactor">
    <cofactor evidence="1">
        <name>Mg(2+)</name>
        <dbReference type="ChEBI" id="CHEBI:18420"/>
    </cofactor>
</comment>
<comment type="subunit">
    <text evidence="1">Monomer.</text>
</comment>
<comment type="subcellular location">
    <subcellularLocation>
        <location evidence="1">Cytoplasm</location>
    </subcellularLocation>
</comment>
<comment type="domain">
    <text evidence="1">The N-terminal domain determines nucleotide recognition and specific binding, while the C-terminal domain determines the specific binding to the target protein.</text>
</comment>
<comment type="similarity">
    <text evidence="1">Belongs to the MobA family.</text>
</comment>
<protein>
    <recommendedName>
        <fullName evidence="1">Molybdenum cofactor guanylyltransferase</fullName>
        <shortName evidence="1">MoCo guanylyltransferase</shortName>
        <ecNumber evidence="1">2.7.7.77</ecNumber>
    </recommendedName>
    <alternativeName>
        <fullName evidence="1">GTP:molybdopterin guanylyltransferase</fullName>
    </alternativeName>
    <alternativeName>
        <fullName evidence="1">Mo-MPT guanylyltransferase</fullName>
    </alternativeName>
    <alternativeName>
        <fullName evidence="1">Molybdopterin guanylyltransferase</fullName>
    </alternativeName>
    <alternativeName>
        <fullName evidence="1">Molybdopterin-guanine dinucleotide synthase</fullName>
        <shortName evidence="1">MGD synthase</shortName>
    </alternativeName>
</protein>
<organism>
    <name type="scientific">Helicobacter pylori (strain G27)</name>
    <dbReference type="NCBI Taxonomy" id="563041"/>
    <lineage>
        <taxon>Bacteria</taxon>
        <taxon>Pseudomonadati</taxon>
        <taxon>Campylobacterota</taxon>
        <taxon>Epsilonproteobacteria</taxon>
        <taxon>Campylobacterales</taxon>
        <taxon>Helicobacteraceae</taxon>
        <taxon>Helicobacter</taxon>
    </lineage>
</organism>
<reference key="1">
    <citation type="journal article" date="2009" name="J. Bacteriol.">
        <title>The complete genome sequence of Helicobacter pylori strain G27.</title>
        <authorList>
            <person name="Baltrus D.A."/>
            <person name="Amieva M.R."/>
            <person name="Covacci A."/>
            <person name="Lowe T.M."/>
            <person name="Merrell D.S."/>
            <person name="Ottemann K.M."/>
            <person name="Stein M."/>
            <person name="Salama N.R."/>
            <person name="Guillemin K."/>
        </authorList>
    </citation>
    <scope>NUCLEOTIDE SEQUENCE [LARGE SCALE GENOMIC DNA]</scope>
    <source>
        <strain>G27</strain>
    </source>
</reference>
<name>MOBA_HELPG</name>
<keyword id="KW-0963">Cytoplasm</keyword>
<keyword id="KW-0342">GTP-binding</keyword>
<keyword id="KW-0460">Magnesium</keyword>
<keyword id="KW-0479">Metal-binding</keyword>
<keyword id="KW-0501">Molybdenum cofactor biosynthesis</keyword>
<keyword id="KW-0547">Nucleotide-binding</keyword>
<keyword id="KW-1185">Reference proteome</keyword>
<keyword id="KW-0808">Transferase</keyword>
<accession>B5Z7D2</accession>
<proteinExistence type="inferred from homology"/>